<protein>
    <recommendedName>
        <fullName evidence="1">Acetate kinase</fullName>
        <ecNumber evidence="1">2.7.2.1</ecNumber>
    </recommendedName>
    <alternativeName>
        <fullName evidence="1">Acetokinase</fullName>
    </alternativeName>
</protein>
<gene>
    <name evidence="1" type="primary">ackA</name>
    <name type="ordered locus">CV_1531</name>
</gene>
<reference key="1">
    <citation type="journal article" date="2003" name="Proc. Natl. Acad. Sci. U.S.A.">
        <title>The complete genome sequence of Chromobacterium violaceum reveals remarkable and exploitable bacterial adaptability.</title>
        <authorList>
            <person name="Vasconcelos A.T.R."/>
            <person name="de Almeida D.F."/>
            <person name="Hungria M."/>
            <person name="Guimaraes C.T."/>
            <person name="Antonio R.V."/>
            <person name="Almeida F.C."/>
            <person name="de Almeida L.G.P."/>
            <person name="de Almeida R."/>
            <person name="Alves-Gomes J.A."/>
            <person name="Andrade E.M."/>
            <person name="Araripe J."/>
            <person name="de Araujo M.F.F."/>
            <person name="Astolfi-Filho S."/>
            <person name="Azevedo V."/>
            <person name="Baptista A.J."/>
            <person name="Bataus L.A.M."/>
            <person name="Batista J.S."/>
            <person name="Belo A."/>
            <person name="van den Berg C."/>
            <person name="Bogo M."/>
            <person name="Bonatto S."/>
            <person name="Bordignon J."/>
            <person name="Brigido M.M."/>
            <person name="Brito C.A."/>
            <person name="Brocchi M."/>
            <person name="Burity H.A."/>
            <person name="Camargo A.A."/>
            <person name="Cardoso D.D.P."/>
            <person name="Carneiro N.P."/>
            <person name="Carraro D.M."/>
            <person name="Carvalho C.M.B."/>
            <person name="Cascardo J.C.M."/>
            <person name="Cavada B.S."/>
            <person name="Chueire L.M.O."/>
            <person name="Creczynski-Pasa T.B."/>
            <person name="Cunha-Junior N.C."/>
            <person name="Fagundes N."/>
            <person name="Falcao C.L."/>
            <person name="Fantinatti F."/>
            <person name="Farias I.P."/>
            <person name="Felipe M.S.S."/>
            <person name="Ferrari L.P."/>
            <person name="Ferro J.A."/>
            <person name="Ferro M.I.T."/>
            <person name="Franco G.R."/>
            <person name="Freitas N.S.A."/>
            <person name="Furlan L.R."/>
            <person name="Gazzinelli R.T."/>
            <person name="Gomes E.A."/>
            <person name="Goncalves P.R."/>
            <person name="Grangeiro T.B."/>
            <person name="Grattapaglia D."/>
            <person name="Grisard E.C."/>
            <person name="Hanna E.S."/>
            <person name="Jardim S.N."/>
            <person name="Laurino J."/>
            <person name="Leoi L.C.T."/>
            <person name="Lima L.F.A."/>
            <person name="Loureiro M.F."/>
            <person name="Lyra M.C.C.P."/>
            <person name="Madeira H.M.F."/>
            <person name="Manfio G.P."/>
            <person name="Maranhao A.Q."/>
            <person name="Martins W.S."/>
            <person name="di Mauro S.M.Z."/>
            <person name="de Medeiros S.R.B."/>
            <person name="Meissner R.V."/>
            <person name="Moreira M.A.M."/>
            <person name="Nascimento F.F."/>
            <person name="Nicolas M.F."/>
            <person name="Oliveira J.G."/>
            <person name="Oliveira S.C."/>
            <person name="Paixao R.F.C."/>
            <person name="Parente J.A."/>
            <person name="Pedrosa F.O."/>
            <person name="Pena S.D.J."/>
            <person name="Pereira J.O."/>
            <person name="Pereira M."/>
            <person name="Pinto L.S.R.C."/>
            <person name="Pinto L.S."/>
            <person name="Porto J.I.R."/>
            <person name="Potrich D.P."/>
            <person name="Ramalho-Neto C.E."/>
            <person name="Reis A.M.M."/>
            <person name="Rigo L.U."/>
            <person name="Rondinelli E."/>
            <person name="Santos E.B.P."/>
            <person name="Santos F.R."/>
            <person name="Schneider M.P.C."/>
            <person name="Seuanez H.N."/>
            <person name="Silva A.M.R."/>
            <person name="da Silva A.L.C."/>
            <person name="Silva D.W."/>
            <person name="Silva R."/>
            <person name="Simoes I.C."/>
            <person name="Simon D."/>
            <person name="Soares C.M.A."/>
            <person name="Soares R.B.A."/>
            <person name="Souza E.M."/>
            <person name="Souza K.R.L."/>
            <person name="Souza R.C."/>
            <person name="Steffens M.B.R."/>
            <person name="Steindel M."/>
            <person name="Teixeira S.R."/>
            <person name="Urmenyi T."/>
            <person name="Vettore A."/>
            <person name="Wassem R."/>
            <person name="Zaha A."/>
            <person name="Simpson A.J.G."/>
        </authorList>
    </citation>
    <scope>NUCLEOTIDE SEQUENCE [LARGE SCALE GENOMIC DNA]</scope>
    <source>
        <strain>ATCC 12472 / DSM 30191 / JCM 1249 / CCUG 213 / NBRC 12614 / NCIMB 9131 / NCTC 9757 / MK</strain>
    </source>
</reference>
<evidence type="ECO:0000255" key="1">
    <source>
        <dbReference type="HAMAP-Rule" id="MF_00020"/>
    </source>
</evidence>
<name>ACKA_CHRVO</name>
<keyword id="KW-0067">ATP-binding</keyword>
<keyword id="KW-0963">Cytoplasm</keyword>
<keyword id="KW-0418">Kinase</keyword>
<keyword id="KW-0460">Magnesium</keyword>
<keyword id="KW-0479">Metal-binding</keyword>
<keyword id="KW-0547">Nucleotide-binding</keyword>
<keyword id="KW-1185">Reference proteome</keyword>
<keyword id="KW-0808">Transferase</keyword>
<comment type="function">
    <text evidence="1">Catalyzes the formation of acetyl phosphate from acetate and ATP. Can also catalyze the reverse reaction.</text>
</comment>
<comment type="catalytic activity">
    <reaction evidence="1">
        <text>acetate + ATP = acetyl phosphate + ADP</text>
        <dbReference type="Rhea" id="RHEA:11352"/>
        <dbReference type="ChEBI" id="CHEBI:22191"/>
        <dbReference type="ChEBI" id="CHEBI:30089"/>
        <dbReference type="ChEBI" id="CHEBI:30616"/>
        <dbReference type="ChEBI" id="CHEBI:456216"/>
        <dbReference type="EC" id="2.7.2.1"/>
    </reaction>
</comment>
<comment type="cofactor">
    <cofactor evidence="1">
        <name>Mg(2+)</name>
        <dbReference type="ChEBI" id="CHEBI:18420"/>
    </cofactor>
    <cofactor evidence="1">
        <name>Mn(2+)</name>
        <dbReference type="ChEBI" id="CHEBI:29035"/>
    </cofactor>
    <text evidence="1">Mg(2+). Can also accept Mn(2+).</text>
</comment>
<comment type="pathway">
    <text evidence="1">Metabolic intermediate biosynthesis; acetyl-CoA biosynthesis; acetyl-CoA from acetate: step 1/2.</text>
</comment>
<comment type="subunit">
    <text evidence="1">Homodimer.</text>
</comment>
<comment type="subcellular location">
    <subcellularLocation>
        <location evidence="1">Cytoplasm</location>
    </subcellularLocation>
</comment>
<comment type="similarity">
    <text evidence="1">Belongs to the acetokinase family.</text>
</comment>
<sequence>MNSSILVINCGSSSLKFALIDSASHEAVMTGLAEKLGLADACITFKHNGDKQTALLSAPDHAAAMHAIIEKLQQVSLLDSVKAIGHRVVHGGEHFKQSALLDETAINEIERCIKLAPLHNPAHILGIRTAIKEFPSLPQVAVFDTSFHQTMPEKAYLYAVPMKLYRENSLRRYGMHGTSYRFVAEEAAKMLGKPANETSLVIAHLGNGASISAIRNGKCADTSMGLTPLEGLVMGTRSGDIDPSVFGYLATERGMDIQSITNMLNKESGLLGLSELSNDCRELEEAAAKGHEGAKRALEVFAYRLAKYVASMSVGAGRLDAVVFTGGIGENSSFLRAEVINQLGFLGLKLDAAANEACIRGNAGRITAADSVPALVINTNEELMIAMDTAKLAGLAN</sequence>
<organism>
    <name type="scientific">Chromobacterium violaceum (strain ATCC 12472 / DSM 30191 / JCM 1249 / CCUG 213 / NBRC 12614 / NCIMB 9131 / NCTC 9757 / MK)</name>
    <dbReference type="NCBI Taxonomy" id="243365"/>
    <lineage>
        <taxon>Bacteria</taxon>
        <taxon>Pseudomonadati</taxon>
        <taxon>Pseudomonadota</taxon>
        <taxon>Betaproteobacteria</taxon>
        <taxon>Neisseriales</taxon>
        <taxon>Chromobacteriaceae</taxon>
        <taxon>Chromobacterium</taxon>
    </lineage>
</organism>
<dbReference type="EC" id="2.7.2.1" evidence="1"/>
<dbReference type="EMBL" id="AE016825">
    <property type="protein sequence ID" value="AAQ59206.1"/>
    <property type="molecule type" value="Genomic_DNA"/>
</dbReference>
<dbReference type="RefSeq" id="WP_011135083.1">
    <property type="nucleotide sequence ID" value="NC_005085.1"/>
</dbReference>
<dbReference type="SMR" id="Q7NXU5"/>
<dbReference type="STRING" id="243365.CV_1531"/>
<dbReference type="KEGG" id="cvi:CV_1531"/>
<dbReference type="eggNOG" id="COG0282">
    <property type="taxonomic scope" value="Bacteria"/>
</dbReference>
<dbReference type="HOGENOM" id="CLU_020352_0_1_4"/>
<dbReference type="OrthoDB" id="9802453at2"/>
<dbReference type="UniPathway" id="UPA00340">
    <property type="reaction ID" value="UER00458"/>
</dbReference>
<dbReference type="Proteomes" id="UP000001424">
    <property type="component" value="Chromosome"/>
</dbReference>
<dbReference type="GO" id="GO:0005829">
    <property type="term" value="C:cytosol"/>
    <property type="evidence" value="ECO:0007669"/>
    <property type="project" value="TreeGrafter"/>
</dbReference>
<dbReference type="GO" id="GO:0008776">
    <property type="term" value="F:acetate kinase activity"/>
    <property type="evidence" value="ECO:0007669"/>
    <property type="project" value="UniProtKB-UniRule"/>
</dbReference>
<dbReference type="GO" id="GO:0005524">
    <property type="term" value="F:ATP binding"/>
    <property type="evidence" value="ECO:0007669"/>
    <property type="project" value="UniProtKB-KW"/>
</dbReference>
<dbReference type="GO" id="GO:0000287">
    <property type="term" value="F:magnesium ion binding"/>
    <property type="evidence" value="ECO:0007669"/>
    <property type="project" value="UniProtKB-UniRule"/>
</dbReference>
<dbReference type="GO" id="GO:0006083">
    <property type="term" value="P:acetate metabolic process"/>
    <property type="evidence" value="ECO:0007669"/>
    <property type="project" value="TreeGrafter"/>
</dbReference>
<dbReference type="GO" id="GO:0006085">
    <property type="term" value="P:acetyl-CoA biosynthetic process"/>
    <property type="evidence" value="ECO:0007669"/>
    <property type="project" value="UniProtKB-UniRule"/>
</dbReference>
<dbReference type="CDD" id="cd24010">
    <property type="entry name" value="ASKHA_NBD_AcK_PK"/>
    <property type="match status" value="1"/>
</dbReference>
<dbReference type="Gene3D" id="3.30.420.40">
    <property type="match status" value="2"/>
</dbReference>
<dbReference type="HAMAP" id="MF_00020">
    <property type="entry name" value="Acetate_kinase"/>
    <property type="match status" value="1"/>
</dbReference>
<dbReference type="InterPro" id="IPR004372">
    <property type="entry name" value="Ac/propionate_kinase"/>
</dbReference>
<dbReference type="InterPro" id="IPR000890">
    <property type="entry name" value="Aliphatic_acid_kin_short-chain"/>
</dbReference>
<dbReference type="InterPro" id="IPR023865">
    <property type="entry name" value="Aliphatic_acid_kinase_CS"/>
</dbReference>
<dbReference type="InterPro" id="IPR043129">
    <property type="entry name" value="ATPase_NBD"/>
</dbReference>
<dbReference type="NCBIfam" id="TIGR00016">
    <property type="entry name" value="ackA"/>
    <property type="match status" value="1"/>
</dbReference>
<dbReference type="PANTHER" id="PTHR21060">
    <property type="entry name" value="ACETATE KINASE"/>
    <property type="match status" value="1"/>
</dbReference>
<dbReference type="PANTHER" id="PTHR21060:SF21">
    <property type="entry name" value="ACETATE KINASE"/>
    <property type="match status" value="1"/>
</dbReference>
<dbReference type="Pfam" id="PF00871">
    <property type="entry name" value="Acetate_kinase"/>
    <property type="match status" value="1"/>
</dbReference>
<dbReference type="PIRSF" id="PIRSF000722">
    <property type="entry name" value="Acetate_prop_kin"/>
    <property type="match status" value="1"/>
</dbReference>
<dbReference type="PRINTS" id="PR00471">
    <property type="entry name" value="ACETATEKNASE"/>
</dbReference>
<dbReference type="SUPFAM" id="SSF53067">
    <property type="entry name" value="Actin-like ATPase domain"/>
    <property type="match status" value="2"/>
</dbReference>
<dbReference type="PROSITE" id="PS01075">
    <property type="entry name" value="ACETATE_KINASE_1"/>
    <property type="match status" value="1"/>
</dbReference>
<dbReference type="PROSITE" id="PS01076">
    <property type="entry name" value="ACETATE_KINASE_2"/>
    <property type="match status" value="1"/>
</dbReference>
<feature type="chain" id="PRO_0000107544" description="Acetate kinase">
    <location>
        <begin position="1"/>
        <end position="397"/>
    </location>
</feature>
<feature type="active site" description="Proton donor/acceptor" evidence="1">
    <location>
        <position position="144"/>
    </location>
</feature>
<feature type="binding site" evidence="1">
    <location>
        <position position="9"/>
    </location>
    <ligand>
        <name>Mg(2+)</name>
        <dbReference type="ChEBI" id="CHEBI:18420"/>
    </ligand>
</feature>
<feature type="binding site" evidence="1">
    <location>
        <position position="16"/>
    </location>
    <ligand>
        <name>ATP</name>
        <dbReference type="ChEBI" id="CHEBI:30616"/>
    </ligand>
</feature>
<feature type="binding site" evidence="1">
    <location>
        <position position="87"/>
    </location>
    <ligand>
        <name>substrate</name>
    </ligand>
</feature>
<feature type="binding site" evidence="1">
    <location>
        <begin position="204"/>
        <end position="208"/>
    </location>
    <ligand>
        <name>ATP</name>
        <dbReference type="ChEBI" id="CHEBI:30616"/>
    </ligand>
</feature>
<feature type="binding site" evidence="1">
    <location>
        <begin position="279"/>
        <end position="281"/>
    </location>
    <ligand>
        <name>ATP</name>
        <dbReference type="ChEBI" id="CHEBI:30616"/>
    </ligand>
</feature>
<feature type="binding site" evidence="1">
    <location>
        <begin position="327"/>
        <end position="331"/>
    </location>
    <ligand>
        <name>ATP</name>
        <dbReference type="ChEBI" id="CHEBI:30616"/>
    </ligand>
</feature>
<feature type="binding site" evidence="1">
    <location>
        <position position="381"/>
    </location>
    <ligand>
        <name>Mg(2+)</name>
        <dbReference type="ChEBI" id="CHEBI:18420"/>
    </ligand>
</feature>
<feature type="site" description="Transition state stabilizer" evidence="1">
    <location>
        <position position="176"/>
    </location>
</feature>
<feature type="site" description="Transition state stabilizer" evidence="1">
    <location>
        <position position="237"/>
    </location>
</feature>
<proteinExistence type="inferred from homology"/>
<accession>Q7NXU5</accession>